<sequence length="340" mass="36285">MFSSLYPLVRAQLFRMDAEDAHHLTLRILGAAGRTGLAGALAPRVPDAPRTVMGLTFRNPVGLAAGLDKDGACIDGLAALGFGFIEVGTVTPRAQPGNPRPRMFRLPQANAVINRMGFNNAGVDQFVKNVQAARYRGILGLNIGKNADTPIERAAEDYLYCLDRVYPFASYVTVNISSPNTKNLRQLQGAGELDALLAALKDKQQRLADMHGKLVPLALKIAPDLDDEQIKSIADTLLRHRFEGVIATNTTLSRTAVAGMQYGDEAGGLSGKPVFDASNAVIRKLRAEVGETVPIIGVGGIFSGEDARAKMAAGASLVQLYTGFIYRGPALVAECVQALR</sequence>
<keyword id="KW-1003">Cell membrane</keyword>
<keyword id="KW-0285">Flavoprotein</keyword>
<keyword id="KW-0288">FMN</keyword>
<keyword id="KW-0472">Membrane</keyword>
<keyword id="KW-0560">Oxidoreductase</keyword>
<keyword id="KW-0665">Pyrimidine biosynthesis</keyword>
<keyword id="KW-1185">Reference proteome</keyword>
<evidence type="ECO:0000255" key="1">
    <source>
        <dbReference type="HAMAP-Rule" id="MF_00225"/>
    </source>
</evidence>
<evidence type="ECO:0000305" key="2"/>
<name>PYRD_PARXL</name>
<accession>Q13ZM3</accession>
<proteinExistence type="inferred from homology"/>
<comment type="function">
    <text evidence="1">Catalyzes the conversion of dihydroorotate to orotate with quinone as electron acceptor.</text>
</comment>
<comment type="catalytic activity">
    <reaction evidence="1">
        <text>(S)-dihydroorotate + a quinone = orotate + a quinol</text>
        <dbReference type="Rhea" id="RHEA:30187"/>
        <dbReference type="ChEBI" id="CHEBI:24646"/>
        <dbReference type="ChEBI" id="CHEBI:30839"/>
        <dbReference type="ChEBI" id="CHEBI:30864"/>
        <dbReference type="ChEBI" id="CHEBI:132124"/>
        <dbReference type="EC" id="1.3.5.2"/>
    </reaction>
</comment>
<comment type="cofactor">
    <cofactor evidence="1">
        <name>FMN</name>
        <dbReference type="ChEBI" id="CHEBI:58210"/>
    </cofactor>
    <text evidence="1">Binds 1 FMN per subunit.</text>
</comment>
<comment type="pathway">
    <text evidence="1">Pyrimidine metabolism; UMP biosynthesis via de novo pathway; orotate from (S)-dihydroorotate (quinone route): step 1/1.</text>
</comment>
<comment type="subunit">
    <text evidence="1">Monomer.</text>
</comment>
<comment type="subcellular location">
    <subcellularLocation>
        <location evidence="1">Cell membrane</location>
        <topology evidence="1">Peripheral membrane protein</topology>
    </subcellularLocation>
</comment>
<comment type="similarity">
    <text evidence="1">Belongs to the dihydroorotate dehydrogenase family. Type 2 subfamily.</text>
</comment>
<comment type="sequence caution" evidence="2">
    <conflict type="erroneous initiation">
        <sequence resource="EMBL-CDS" id="ABE30466"/>
    </conflict>
</comment>
<protein>
    <recommendedName>
        <fullName evidence="1">Dihydroorotate dehydrogenase (quinone)</fullName>
        <ecNumber evidence="1">1.3.5.2</ecNumber>
    </recommendedName>
    <alternativeName>
        <fullName evidence="1">DHOdehase</fullName>
        <shortName evidence="1">DHOD</shortName>
        <shortName evidence="1">DHODase</shortName>
    </alternativeName>
    <alternativeName>
        <fullName evidence="1">Dihydroorotate oxidase</fullName>
    </alternativeName>
</protein>
<dbReference type="EC" id="1.3.5.2" evidence="1"/>
<dbReference type="EMBL" id="CP000270">
    <property type="protein sequence ID" value="ABE30466.1"/>
    <property type="status" value="ALT_INIT"/>
    <property type="molecule type" value="Genomic_DNA"/>
</dbReference>
<dbReference type="SMR" id="Q13ZM3"/>
<dbReference type="STRING" id="266265.Bxe_A2507"/>
<dbReference type="KEGG" id="bxb:DR64_201"/>
<dbReference type="KEGG" id="bxe:Bxe_A2507"/>
<dbReference type="eggNOG" id="COG0167">
    <property type="taxonomic scope" value="Bacteria"/>
</dbReference>
<dbReference type="UniPathway" id="UPA00070">
    <property type="reaction ID" value="UER00946"/>
</dbReference>
<dbReference type="Proteomes" id="UP000001817">
    <property type="component" value="Chromosome 1"/>
</dbReference>
<dbReference type="GO" id="GO:0005737">
    <property type="term" value="C:cytoplasm"/>
    <property type="evidence" value="ECO:0007669"/>
    <property type="project" value="InterPro"/>
</dbReference>
<dbReference type="GO" id="GO:0005886">
    <property type="term" value="C:plasma membrane"/>
    <property type="evidence" value="ECO:0007669"/>
    <property type="project" value="UniProtKB-SubCell"/>
</dbReference>
<dbReference type="GO" id="GO:0106430">
    <property type="term" value="F:dihydroorotate dehydrogenase (quinone) activity"/>
    <property type="evidence" value="ECO:0007669"/>
    <property type="project" value="UniProtKB-EC"/>
</dbReference>
<dbReference type="GO" id="GO:0006207">
    <property type="term" value="P:'de novo' pyrimidine nucleobase biosynthetic process"/>
    <property type="evidence" value="ECO:0007669"/>
    <property type="project" value="InterPro"/>
</dbReference>
<dbReference type="GO" id="GO:0044205">
    <property type="term" value="P:'de novo' UMP biosynthetic process"/>
    <property type="evidence" value="ECO:0007669"/>
    <property type="project" value="UniProtKB-UniRule"/>
</dbReference>
<dbReference type="CDD" id="cd04738">
    <property type="entry name" value="DHOD_2_like"/>
    <property type="match status" value="1"/>
</dbReference>
<dbReference type="FunFam" id="3.20.20.70:FF:000028">
    <property type="entry name" value="Dihydroorotate dehydrogenase (quinone)"/>
    <property type="match status" value="1"/>
</dbReference>
<dbReference type="Gene3D" id="3.20.20.70">
    <property type="entry name" value="Aldolase class I"/>
    <property type="match status" value="1"/>
</dbReference>
<dbReference type="HAMAP" id="MF_00225">
    <property type="entry name" value="DHO_dh_type2"/>
    <property type="match status" value="1"/>
</dbReference>
<dbReference type="InterPro" id="IPR013785">
    <property type="entry name" value="Aldolase_TIM"/>
</dbReference>
<dbReference type="InterPro" id="IPR050074">
    <property type="entry name" value="DHO_dehydrogenase"/>
</dbReference>
<dbReference type="InterPro" id="IPR012135">
    <property type="entry name" value="Dihydroorotate_DH_1_2"/>
</dbReference>
<dbReference type="InterPro" id="IPR005719">
    <property type="entry name" value="Dihydroorotate_DH_2"/>
</dbReference>
<dbReference type="InterPro" id="IPR005720">
    <property type="entry name" value="Dihydroorotate_DH_cat"/>
</dbReference>
<dbReference type="InterPro" id="IPR001295">
    <property type="entry name" value="Dihydroorotate_DH_CS"/>
</dbReference>
<dbReference type="NCBIfam" id="NF003644">
    <property type="entry name" value="PRK05286.1-1"/>
    <property type="match status" value="1"/>
</dbReference>
<dbReference type="NCBIfam" id="NF003645">
    <property type="entry name" value="PRK05286.1-2"/>
    <property type="match status" value="1"/>
</dbReference>
<dbReference type="NCBIfam" id="NF003646">
    <property type="entry name" value="PRK05286.1-4"/>
    <property type="match status" value="1"/>
</dbReference>
<dbReference type="NCBIfam" id="NF003652">
    <property type="entry name" value="PRK05286.2-5"/>
    <property type="match status" value="1"/>
</dbReference>
<dbReference type="NCBIfam" id="TIGR01036">
    <property type="entry name" value="pyrD_sub2"/>
    <property type="match status" value="1"/>
</dbReference>
<dbReference type="PANTHER" id="PTHR48109:SF4">
    <property type="entry name" value="DIHYDROOROTATE DEHYDROGENASE (QUINONE), MITOCHONDRIAL"/>
    <property type="match status" value="1"/>
</dbReference>
<dbReference type="PANTHER" id="PTHR48109">
    <property type="entry name" value="DIHYDROOROTATE DEHYDROGENASE (QUINONE), MITOCHONDRIAL-RELATED"/>
    <property type="match status" value="1"/>
</dbReference>
<dbReference type="Pfam" id="PF01180">
    <property type="entry name" value="DHO_dh"/>
    <property type="match status" value="1"/>
</dbReference>
<dbReference type="PIRSF" id="PIRSF000164">
    <property type="entry name" value="DHO_oxidase"/>
    <property type="match status" value="1"/>
</dbReference>
<dbReference type="SUPFAM" id="SSF51395">
    <property type="entry name" value="FMN-linked oxidoreductases"/>
    <property type="match status" value="1"/>
</dbReference>
<dbReference type="PROSITE" id="PS00911">
    <property type="entry name" value="DHODEHASE_1"/>
    <property type="match status" value="1"/>
</dbReference>
<dbReference type="PROSITE" id="PS00912">
    <property type="entry name" value="DHODEHASE_2"/>
    <property type="match status" value="1"/>
</dbReference>
<gene>
    <name evidence="1" type="primary">pyrD</name>
    <name type="ordered locus">Bxeno_A1928</name>
    <name type="ORF">Bxe_A2507</name>
</gene>
<reference key="1">
    <citation type="journal article" date="2006" name="Proc. Natl. Acad. Sci. U.S.A.">
        <title>Burkholderia xenovorans LB400 harbors a multi-replicon, 9.73-Mbp genome shaped for versatility.</title>
        <authorList>
            <person name="Chain P.S.G."/>
            <person name="Denef V.J."/>
            <person name="Konstantinidis K.T."/>
            <person name="Vergez L.M."/>
            <person name="Agullo L."/>
            <person name="Reyes V.L."/>
            <person name="Hauser L."/>
            <person name="Cordova M."/>
            <person name="Gomez L."/>
            <person name="Gonzalez M."/>
            <person name="Land M."/>
            <person name="Lao V."/>
            <person name="Larimer F."/>
            <person name="LiPuma J.J."/>
            <person name="Mahenthiralingam E."/>
            <person name="Malfatti S.A."/>
            <person name="Marx C.J."/>
            <person name="Parnell J.J."/>
            <person name="Ramette A."/>
            <person name="Richardson P."/>
            <person name="Seeger M."/>
            <person name="Smith D."/>
            <person name="Spilker T."/>
            <person name="Sul W.J."/>
            <person name="Tsoi T.V."/>
            <person name="Ulrich L.E."/>
            <person name="Zhulin I.B."/>
            <person name="Tiedje J.M."/>
        </authorList>
    </citation>
    <scope>NUCLEOTIDE SEQUENCE [LARGE SCALE GENOMIC DNA]</scope>
    <source>
        <strain>LB400</strain>
    </source>
</reference>
<feature type="chain" id="PRO_0000336461" description="Dihydroorotate dehydrogenase (quinone)">
    <location>
        <begin position="1"/>
        <end position="340"/>
    </location>
</feature>
<feature type="active site" description="Nucleophile" evidence="1">
    <location>
        <position position="178"/>
    </location>
</feature>
<feature type="binding site" evidence="1">
    <location>
        <begin position="65"/>
        <end position="69"/>
    </location>
    <ligand>
        <name>FMN</name>
        <dbReference type="ChEBI" id="CHEBI:58210"/>
    </ligand>
</feature>
<feature type="binding site" evidence="1">
    <location>
        <position position="69"/>
    </location>
    <ligand>
        <name>substrate</name>
    </ligand>
</feature>
<feature type="binding site" evidence="1">
    <location>
        <position position="89"/>
    </location>
    <ligand>
        <name>FMN</name>
        <dbReference type="ChEBI" id="CHEBI:58210"/>
    </ligand>
</feature>
<feature type="binding site" evidence="1">
    <location>
        <begin position="114"/>
        <end position="118"/>
    </location>
    <ligand>
        <name>substrate</name>
    </ligand>
</feature>
<feature type="binding site" evidence="1">
    <location>
        <position position="142"/>
    </location>
    <ligand>
        <name>FMN</name>
        <dbReference type="ChEBI" id="CHEBI:58210"/>
    </ligand>
</feature>
<feature type="binding site" evidence="1">
    <location>
        <position position="175"/>
    </location>
    <ligand>
        <name>FMN</name>
        <dbReference type="ChEBI" id="CHEBI:58210"/>
    </ligand>
</feature>
<feature type="binding site" evidence="1">
    <location>
        <position position="175"/>
    </location>
    <ligand>
        <name>substrate</name>
    </ligand>
</feature>
<feature type="binding site" evidence="1">
    <location>
        <position position="180"/>
    </location>
    <ligand>
        <name>substrate</name>
    </ligand>
</feature>
<feature type="binding site" evidence="1">
    <location>
        <position position="220"/>
    </location>
    <ligand>
        <name>FMN</name>
        <dbReference type="ChEBI" id="CHEBI:58210"/>
    </ligand>
</feature>
<feature type="binding site" evidence="1">
    <location>
        <position position="248"/>
    </location>
    <ligand>
        <name>FMN</name>
        <dbReference type="ChEBI" id="CHEBI:58210"/>
    </ligand>
</feature>
<feature type="binding site" evidence="1">
    <location>
        <begin position="249"/>
        <end position="250"/>
    </location>
    <ligand>
        <name>substrate</name>
    </ligand>
</feature>
<feature type="binding site" evidence="1">
    <location>
        <position position="271"/>
    </location>
    <ligand>
        <name>FMN</name>
        <dbReference type="ChEBI" id="CHEBI:58210"/>
    </ligand>
</feature>
<feature type="binding site" evidence="1">
    <location>
        <position position="300"/>
    </location>
    <ligand>
        <name>FMN</name>
        <dbReference type="ChEBI" id="CHEBI:58210"/>
    </ligand>
</feature>
<feature type="binding site" evidence="1">
    <location>
        <begin position="321"/>
        <end position="322"/>
    </location>
    <ligand>
        <name>FMN</name>
        <dbReference type="ChEBI" id="CHEBI:58210"/>
    </ligand>
</feature>
<organism>
    <name type="scientific">Paraburkholderia xenovorans (strain LB400)</name>
    <dbReference type="NCBI Taxonomy" id="266265"/>
    <lineage>
        <taxon>Bacteria</taxon>
        <taxon>Pseudomonadati</taxon>
        <taxon>Pseudomonadota</taxon>
        <taxon>Betaproteobacteria</taxon>
        <taxon>Burkholderiales</taxon>
        <taxon>Burkholderiaceae</taxon>
        <taxon>Paraburkholderia</taxon>
    </lineage>
</organism>